<proteinExistence type="inferred from homology"/>
<protein>
    <recommendedName>
        <fullName evidence="1">Cytidine deaminase</fullName>
        <ecNumber evidence="1">3.5.4.5</ecNumber>
    </recommendedName>
    <alternativeName>
        <fullName evidence="1">Cytidine aminohydrolase</fullName>
        <shortName evidence="1">CDA</shortName>
    </alternativeName>
</protein>
<reference key="1">
    <citation type="journal article" date="2001" name="Nature">
        <title>Genome sequence of enterohaemorrhagic Escherichia coli O157:H7.</title>
        <authorList>
            <person name="Perna N.T."/>
            <person name="Plunkett G. III"/>
            <person name="Burland V."/>
            <person name="Mau B."/>
            <person name="Glasner J.D."/>
            <person name="Rose D.J."/>
            <person name="Mayhew G.F."/>
            <person name="Evans P.S."/>
            <person name="Gregor J."/>
            <person name="Kirkpatrick H.A."/>
            <person name="Posfai G."/>
            <person name="Hackett J."/>
            <person name="Klink S."/>
            <person name="Boutin A."/>
            <person name="Shao Y."/>
            <person name="Miller L."/>
            <person name="Grotbeck E.J."/>
            <person name="Davis N.W."/>
            <person name="Lim A."/>
            <person name="Dimalanta E.T."/>
            <person name="Potamousis K."/>
            <person name="Apodaca J."/>
            <person name="Anantharaman T.S."/>
            <person name="Lin J."/>
            <person name="Yen G."/>
            <person name="Schwartz D.C."/>
            <person name="Welch R.A."/>
            <person name="Blattner F.R."/>
        </authorList>
    </citation>
    <scope>NUCLEOTIDE SEQUENCE [LARGE SCALE GENOMIC DNA]</scope>
    <source>
        <strain>O157:H7 / EDL933 / ATCC 700927 / EHEC</strain>
    </source>
</reference>
<reference key="2">
    <citation type="journal article" date="2001" name="DNA Res.">
        <title>Complete genome sequence of enterohemorrhagic Escherichia coli O157:H7 and genomic comparison with a laboratory strain K-12.</title>
        <authorList>
            <person name="Hayashi T."/>
            <person name="Makino K."/>
            <person name="Ohnishi M."/>
            <person name="Kurokawa K."/>
            <person name="Ishii K."/>
            <person name="Yokoyama K."/>
            <person name="Han C.-G."/>
            <person name="Ohtsubo E."/>
            <person name="Nakayama K."/>
            <person name="Murata T."/>
            <person name="Tanaka M."/>
            <person name="Tobe T."/>
            <person name="Iida T."/>
            <person name="Takami H."/>
            <person name="Honda T."/>
            <person name="Sasakawa C."/>
            <person name="Ogasawara N."/>
            <person name="Yasunaga T."/>
            <person name="Kuhara S."/>
            <person name="Shiba T."/>
            <person name="Hattori M."/>
            <person name="Shinagawa H."/>
        </authorList>
    </citation>
    <scope>NUCLEOTIDE SEQUENCE [LARGE SCALE GENOMIC DNA]</scope>
    <source>
        <strain>O157:H7 / Sakai / RIMD 0509952 / EHEC</strain>
    </source>
</reference>
<evidence type="ECO:0000255" key="1">
    <source>
        <dbReference type="HAMAP-Rule" id="MF_01558"/>
    </source>
</evidence>
<evidence type="ECO:0000255" key="2">
    <source>
        <dbReference type="PROSITE-ProRule" id="PRU01083"/>
    </source>
</evidence>
<gene>
    <name evidence="1" type="primary">cdd</name>
    <name type="ordered locus">Z3398</name>
    <name type="ordered locus">ECs3035</name>
</gene>
<comment type="function">
    <text evidence="1">This enzyme scavenges exogenous and endogenous cytidine and 2'-deoxycytidine for UMP synthesis.</text>
</comment>
<comment type="catalytic activity">
    <reaction evidence="1">
        <text>cytidine + H2O + H(+) = uridine + NH4(+)</text>
        <dbReference type="Rhea" id="RHEA:16069"/>
        <dbReference type="ChEBI" id="CHEBI:15377"/>
        <dbReference type="ChEBI" id="CHEBI:15378"/>
        <dbReference type="ChEBI" id="CHEBI:16704"/>
        <dbReference type="ChEBI" id="CHEBI:17562"/>
        <dbReference type="ChEBI" id="CHEBI:28938"/>
        <dbReference type="EC" id="3.5.4.5"/>
    </reaction>
</comment>
<comment type="catalytic activity">
    <reaction evidence="1">
        <text>2'-deoxycytidine + H2O + H(+) = 2'-deoxyuridine + NH4(+)</text>
        <dbReference type="Rhea" id="RHEA:13433"/>
        <dbReference type="ChEBI" id="CHEBI:15377"/>
        <dbReference type="ChEBI" id="CHEBI:15378"/>
        <dbReference type="ChEBI" id="CHEBI:15698"/>
        <dbReference type="ChEBI" id="CHEBI:16450"/>
        <dbReference type="ChEBI" id="CHEBI:28938"/>
        <dbReference type="EC" id="3.5.4.5"/>
    </reaction>
</comment>
<comment type="cofactor">
    <cofactor evidence="1">
        <name>Zn(2+)</name>
        <dbReference type="ChEBI" id="CHEBI:29105"/>
    </cofactor>
    <text evidence="1">Binds 1 zinc ion.</text>
</comment>
<comment type="subunit">
    <text evidence="1">Homodimer.</text>
</comment>
<comment type="similarity">
    <text evidence="1">Belongs to the cytidine and deoxycytidylate deaminase family.</text>
</comment>
<organism>
    <name type="scientific">Escherichia coli O157:H7</name>
    <dbReference type="NCBI Taxonomy" id="83334"/>
    <lineage>
        <taxon>Bacteria</taxon>
        <taxon>Pseudomonadati</taxon>
        <taxon>Pseudomonadota</taxon>
        <taxon>Gammaproteobacteria</taxon>
        <taxon>Enterobacterales</taxon>
        <taxon>Enterobacteriaceae</taxon>
        <taxon>Escherichia</taxon>
    </lineage>
</organism>
<dbReference type="EC" id="3.5.4.5" evidence="1"/>
<dbReference type="EMBL" id="AE005174">
    <property type="protein sequence ID" value="AAG57281.2"/>
    <property type="molecule type" value="Genomic_DNA"/>
</dbReference>
<dbReference type="EMBL" id="BA000007">
    <property type="protein sequence ID" value="BAB36458.1"/>
    <property type="molecule type" value="Genomic_DNA"/>
</dbReference>
<dbReference type="PIR" id="C91008">
    <property type="entry name" value="C91008"/>
</dbReference>
<dbReference type="PIR" id="E85852">
    <property type="entry name" value="E85852"/>
</dbReference>
<dbReference type="RefSeq" id="NP_311062.1">
    <property type="nucleotide sequence ID" value="NC_002695.1"/>
</dbReference>
<dbReference type="RefSeq" id="WP_000553550.1">
    <property type="nucleotide sequence ID" value="NZ_VOAI01000001.1"/>
</dbReference>
<dbReference type="SMR" id="Q8X648"/>
<dbReference type="STRING" id="155864.Z3398"/>
<dbReference type="GeneID" id="916739"/>
<dbReference type="KEGG" id="ece:Z3398"/>
<dbReference type="KEGG" id="ecs:ECs_3035"/>
<dbReference type="PATRIC" id="fig|386585.9.peg.3160"/>
<dbReference type="eggNOG" id="COG0295">
    <property type="taxonomic scope" value="Bacteria"/>
</dbReference>
<dbReference type="HOGENOM" id="CLU_052424_0_0_6"/>
<dbReference type="OMA" id="NYSPCGH"/>
<dbReference type="Proteomes" id="UP000000558">
    <property type="component" value="Chromosome"/>
</dbReference>
<dbReference type="Proteomes" id="UP000002519">
    <property type="component" value="Chromosome"/>
</dbReference>
<dbReference type="GO" id="GO:0005829">
    <property type="term" value="C:cytosol"/>
    <property type="evidence" value="ECO:0007669"/>
    <property type="project" value="TreeGrafter"/>
</dbReference>
<dbReference type="GO" id="GO:0004126">
    <property type="term" value="F:cytidine deaminase activity"/>
    <property type="evidence" value="ECO:0007669"/>
    <property type="project" value="UniProtKB-UniRule"/>
</dbReference>
<dbReference type="GO" id="GO:0042802">
    <property type="term" value="F:identical protein binding"/>
    <property type="evidence" value="ECO:0007669"/>
    <property type="project" value="UniProtKB-ARBA"/>
</dbReference>
<dbReference type="GO" id="GO:0008270">
    <property type="term" value="F:zinc ion binding"/>
    <property type="evidence" value="ECO:0007669"/>
    <property type="project" value="UniProtKB-UniRule"/>
</dbReference>
<dbReference type="GO" id="GO:0009972">
    <property type="term" value="P:cytidine deamination"/>
    <property type="evidence" value="ECO:0007669"/>
    <property type="project" value="InterPro"/>
</dbReference>
<dbReference type="CDD" id="cd01283">
    <property type="entry name" value="cytidine_deaminase"/>
    <property type="match status" value="2"/>
</dbReference>
<dbReference type="FunFam" id="3.40.140.10:FF:000006">
    <property type="entry name" value="Cytidine deaminase"/>
    <property type="match status" value="1"/>
</dbReference>
<dbReference type="FunFam" id="3.40.140.10:FF:000007">
    <property type="entry name" value="Cytidine deaminase"/>
    <property type="match status" value="1"/>
</dbReference>
<dbReference type="Gene3D" id="3.40.140.10">
    <property type="entry name" value="Cytidine Deaminase, domain 2"/>
    <property type="match status" value="2"/>
</dbReference>
<dbReference type="HAMAP" id="MF_01558">
    <property type="entry name" value="Cyt_deam"/>
    <property type="match status" value="1"/>
</dbReference>
<dbReference type="InterPro" id="IPR016192">
    <property type="entry name" value="APOBEC/CMP_deaminase_Zn-bd"/>
</dbReference>
<dbReference type="InterPro" id="IPR002125">
    <property type="entry name" value="CMP_dCMP_dom"/>
</dbReference>
<dbReference type="InterPro" id="IPR013171">
    <property type="entry name" value="Cyd/dCyd_deaminase_Zn-bd"/>
</dbReference>
<dbReference type="InterPro" id="IPR050202">
    <property type="entry name" value="Cyt/Deoxycyt_deaminase"/>
</dbReference>
<dbReference type="InterPro" id="IPR006263">
    <property type="entry name" value="Cyt_deam_dimer"/>
</dbReference>
<dbReference type="InterPro" id="IPR016193">
    <property type="entry name" value="Cytidine_deaminase-like"/>
</dbReference>
<dbReference type="InterPro" id="IPR020797">
    <property type="entry name" value="Cytidine_deaminase_bacteria"/>
</dbReference>
<dbReference type="NCBIfam" id="TIGR01355">
    <property type="entry name" value="cyt_deam_dimer"/>
    <property type="match status" value="1"/>
</dbReference>
<dbReference type="NCBIfam" id="NF006537">
    <property type="entry name" value="PRK09027.1"/>
    <property type="match status" value="1"/>
</dbReference>
<dbReference type="PANTHER" id="PTHR11644">
    <property type="entry name" value="CYTIDINE DEAMINASE"/>
    <property type="match status" value="1"/>
</dbReference>
<dbReference type="PANTHER" id="PTHR11644:SF2">
    <property type="entry name" value="CYTIDINE DEAMINASE"/>
    <property type="match status" value="1"/>
</dbReference>
<dbReference type="Pfam" id="PF00383">
    <property type="entry name" value="dCMP_cyt_deam_1"/>
    <property type="match status" value="1"/>
</dbReference>
<dbReference type="Pfam" id="PF08211">
    <property type="entry name" value="dCMP_cyt_deam_2"/>
    <property type="match status" value="1"/>
</dbReference>
<dbReference type="PIRSF" id="PIRSF006334">
    <property type="entry name" value="Cdd_plus_pseudo"/>
    <property type="match status" value="1"/>
</dbReference>
<dbReference type="SUPFAM" id="SSF53927">
    <property type="entry name" value="Cytidine deaminase-like"/>
    <property type="match status" value="2"/>
</dbReference>
<dbReference type="PROSITE" id="PS00903">
    <property type="entry name" value="CYT_DCMP_DEAMINASES_1"/>
    <property type="match status" value="1"/>
</dbReference>
<dbReference type="PROSITE" id="PS51747">
    <property type="entry name" value="CYT_DCMP_DEAMINASES_2"/>
    <property type="match status" value="2"/>
</dbReference>
<feature type="chain" id="PRO_0000171650" description="Cytidine deaminase">
    <location>
        <begin position="1"/>
        <end position="294"/>
    </location>
</feature>
<feature type="domain" description="CMP/dCMP-type deaminase 1" evidence="2">
    <location>
        <begin position="48"/>
        <end position="168"/>
    </location>
</feature>
<feature type="domain" description="CMP/dCMP-type deaminase 2" evidence="2">
    <location>
        <begin position="186"/>
        <end position="294"/>
    </location>
</feature>
<feature type="active site" description="Proton donor" evidence="1">
    <location>
        <position position="104"/>
    </location>
</feature>
<feature type="binding site" evidence="1">
    <location>
        <begin position="89"/>
        <end position="91"/>
    </location>
    <ligand>
        <name>substrate</name>
    </ligand>
</feature>
<feature type="binding site" evidence="1">
    <location>
        <position position="102"/>
    </location>
    <ligand>
        <name>Zn(2+)</name>
        <dbReference type="ChEBI" id="CHEBI:29105"/>
        <note>catalytic</note>
    </ligand>
</feature>
<feature type="binding site" evidence="1">
    <location>
        <position position="129"/>
    </location>
    <ligand>
        <name>Zn(2+)</name>
        <dbReference type="ChEBI" id="CHEBI:29105"/>
        <note>catalytic</note>
    </ligand>
</feature>
<feature type="binding site" evidence="1">
    <location>
        <position position="132"/>
    </location>
    <ligand>
        <name>Zn(2+)</name>
        <dbReference type="ChEBI" id="CHEBI:29105"/>
        <note>catalytic</note>
    </ligand>
</feature>
<sequence length="294" mass="31541">MHPRFQTAFAQLADNLQSALEPILADKYFPALLTGEQVSSLKSATGLDEDALAFALLPLAAACARTPLSNFNVGAIARGVSGTWYFGANMEFIGATMQQTVHAEQSAISHAWLSGEKALAAITVNYTPCGHCRQFMNELNSGLDLRIHLPGREAHALRDYLADAFGPKDLEIKTLLMDEQDHGYALTGDALSQAAIAAANRSHMPYSKSPSGVALECKDGRIFSGSYAENAAFNPTLPPLQGALILLNLKGYDYPDIQRAVLAEKADAPLIQWDATSATLKALGCHNIDRVLLA</sequence>
<keyword id="KW-0378">Hydrolase</keyword>
<keyword id="KW-0479">Metal-binding</keyword>
<keyword id="KW-1185">Reference proteome</keyword>
<keyword id="KW-0862">Zinc</keyword>
<accession>Q8X648</accession>
<accession>Q7AC93</accession>
<name>CDD_ECO57</name>